<gene>
    <name evidence="1" type="primary">hisG</name>
    <name type="ordered locus">Shewmr7_2177</name>
</gene>
<reference key="1">
    <citation type="submission" date="2006-08" db="EMBL/GenBank/DDBJ databases">
        <title>Complete sequence of chromosome 1 of Shewanella sp. MR-7.</title>
        <authorList>
            <person name="Copeland A."/>
            <person name="Lucas S."/>
            <person name="Lapidus A."/>
            <person name="Barry K."/>
            <person name="Detter J.C."/>
            <person name="Glavina del Rio T."/>
            <person name="Hammon N."/>
            <person name="Israni S."/>
            <person name="Dalin E."/>
            <person name="Tice H."/>
            <person name="Pitluck S."/>
            <person name="Kiss H."/>
            <person name="Brettin T."/>
            <person name="Bruce D."/>
            <person name="Han C."/>
            <person name="Tapia R."/>
            <person name="Gilna P."/>
            <person name="Schmutz J."/>
            <person name="Larimer F."/>
            <person name="Land M."/>
            <person name="Hauser L."/>
            <person name="Kyrpides N."/>
            <person name="Mikhailova N."/>
            <person name="Nealson K."/>
            <person name="Konstantinidis K."/>
            <person name="Klappenbach J."/>
            <person name="Tiedje J."/>
            <person name="Richardson P."/>
        </authorList>
    </citation>
    <scope>NUCLEOTIDE SEQUENCE [LARGE SCALE GENOMIC DNA]</scope>
    <source>
        <strain>MR-7</strain>
    </source>
</reference>
<evidence type="ECO:0000255" key="1">
    <source>
        <dbReference type="HAMAP-Rule" id="MF_00079"/>
    </source>
</evidence>
<dbReference type="EC" id="2.4.2.17" evidence="1"/>
<dbReference type="EMBL" id="CP000444">
    <property type="protein sequence ID" value="ABI43165.1"/>
    <property type="molecule type" value="Genomic_DNA"/>
</dbReference>
<dbReference type="SMR" id="Q0HUP0"/>
<dbReference type="KEGG" id="shm:Shewmr7_2177"/>
<dbReference type="HOGENOM" id="CLU_038115_1_0_6"/>
<dbReference type="UniPathway" id="UPA00031">
    <property type="reaction ID" value="UER00006"/>
</dbReference>
<dbReference type="GO" id="GO:0005737">
    <property type="term" value="C:cytoplasm"/>
    <property type="evidence" value="ECO:0007669"/>
    <property type="project" value="UniProtKB-SubCell"/>
</dbReference>
<dbReference type="GO" id="GO:0005524">
    <property type="term" value="F:ATP binding"/>
    <property type="evidence" value="ECO:0007669"/>
    <property type="project" value="UniProtKB-KW"/>
</dbReference>
<dbReference type="GO" id="GO:0003879">
    <property type="term" value="F:ATP phosphoribosyltransferase activity"/>
    <property type="evidence" value="ECO:0007669"/>
    <property type="project" value="UniProtKB-UniRule"/>
</dbReference>
<dbReference type="GO" id="GO:0000287">
    <property type="term" value="F:magnesium ion binding"/>
    <property type="evidence" value="ECO:0007669"/>
    <property type="project" value="UniProtKB-UniRule"/>
</dbReference>
<dbReference type="GO" id="GO:0000105">
    <property type="term" value="P:L-histidine biosynthetic process"/>
    <property type="evidence" value="ECO:0007669"/>
    <property type="project" value="UniProtKB-UniRule"/>
</dbReference>
<dbReference type="CDD" id="cd13592">
    <property type="entry name" value="PBP2_HisGL2"/>
    <property type="match status" value="1"/>
</dbReference>
<dbReference type="FunFam" id="3.30.70.120:FF:000002">
    <property type="entry name" value="ATP phosphoribosyltransferase"/>
    <property type="match status" value="1"/>
</dbReference>
<dbReference type="FunFam" id="3.40.190.10:FF:000008">
    <property type="entry name" value="ATP phosphoribosyltransferase"/>
    <property type="match status" value="1"/>
</dbReference>
<dbReference type="Gene3D" id="3.30.70.120">
    <property type="match status" value="1"/>
</dbReference>
<dbReference type="Gene3D" id="3.40.190.10">
    <property type="entry name" value="Periplasmic binding protein-like II"/>
    <property type="match status" value="2"/>
</dbReference>
<dbReference type="HAMAP" id="MF_00079">
    <property type="entry name" value="HisG_Long"/>
    <property type="match status" value="1"/>
</dbReference>
<dbReference type="InterPro" id="IPR020621">
    <property type="entry name" value="ATP-PRT_HisG_long"/>
</dbReference>
<dbReference type="InterPro" id="IPR013820">
    <property type="entry name" value="ATP_PRibTrfase_cat"/>
</dbReference>
<dbReference type="InterPro" id="IPR018198">
    <property type="entry name" value="ATP_PRibTrfase_CS"/>
</dbReference>
<dbReference type="InterPro" id="IPR001348">
    <property type="entry name" value="ATP_PRibTrfase_HisG"/>
</dbReference>
<dbReference type="InterPro" id="IPR013115">
    <property type="entry name" value="HisG_C"/>
</dbReference>
<dbReference type="InterPro" id="IPR011322">
    <property type="entry name" value="N-reg_PII-like_a/b"/>
</dbReference>
<dbReference type="InterPro" id="IPR015867">
    <property type="entry name" value="N-reg_PII/ATP_PRibTrfase_C"/>
</dbReference>
<dbReference type="NCBIfam" id="TIGR00070">
    <property type="entry name" value="hisG"/>
    <property type="match status" value="1"/>
</dbReference>
<dbReference type="NCBIfam" id="TIGR03455">
    <property type="entry name" value="HisG_C-term"/>
    <property type="match status" value="1"/>
</dbReference>
<dbReference type="PANTHER" id="PTHR21403:SF8">
    <property type="entry name" value="ATP PHOSPHORIBOSYLTRANSFERASE"/>
    <property type="match status" value="1"/>
</dbReference>
<dbReference type="PANTHER" id="PTHR21403">
    <property type="entry name" value="ATP PHOSPHORIBOSYLTRANSFERASE ATP-PRTASE"/>
    <property type="match status" value="1"/>
</dbReference>
<dbReference type="Pfam" id="PF01634">
    <property type="entry name" value="HisG"/>
    <property type="match status" value="1"/>
</dbReference>
<dbReference type="Pfam" id="PF08029">
    <property type="entry name" value="HisG_C"/>
    <property type="match status" value="1"/>
</dbReference>
<dbReference type="SUPFAM" id="SSF54913">
    <property type="entry name" value="GlnB-like"/>
    <property type="match status" value="1"/>
</dbReference>
<dbReference type="SUPFAM" id="SSF53850">
    <property type="entry name" value="Periplasmic binding protein-like II"/>
    <property type="match status" value="1"/>
</dbReference>
<dbReference type="PROSITE" id="PS01316">
    <property type="entry name" value="ATP_P_PHORIBOSYLTR"/>
    <property type="match status" value="1"/>
</dbReference>
<comment type="function">
    <text evidence="1">Catalyzes the condensation of ATP and 5-phosphoribose 1-diphosphate to form N'-(5'-phosphoribosyl)-ATP (PR-ATP). Has a crucial role in the pathway because the rate of histidine biosynthesis seems to be controlled primarily by regulation of HisG enzymatic activity.</text>
</comment>
<comment type="catalytic activity">
    <reaction evidence="1">
        <text>1-(5-phospho-beta-D-ribosyl)-ATP + diphosphate = 5-phospho-alpha-D-ribose 1-diphosphate + ATP</text>
        <dbReference type="Rhea" id="RHEA:18473"/>
        <dbReference type="ChEBI" id="CHEBI:30616"/>
        <dbReference type="ChEBI" id="CHEBI:33019"/>
        <dbReference type="ChEBI" id="CHEBI:58017"/>
        <dbReference type="ChEBI" id="CHEBI:73183"/>
        <dbReference type="EC" id="2.4.2.17"/>
    </reaction>
</comment>
<comment type="cofactor">
    <cofactor evidence="1">
        <name>Mg(2+)</name>
        <dbReference type="ChEBI" id="CHEBI:18420"/>
    </cofactor>
</comment>
<comment type="activity regulation">
    <text evidence="1">Feedback inhibited by histidine.</text>
</comment>
<comment type="pathway">
    <text evidence="1">Amino-acid biosynthesis; L-histidine biosynthesis; L-histidine from 5-phospho-alpha-D-ribose 1-diphosphate: step 1/9.</text>
</comment>
<comment type="subcellular location">
    <subcellularLocation>
        <location evidence="1">Cytoplasm</location>
    </subcellularLocation>
</comment>
<comment type="similarity">
    <text evidence="1">Belongs to the ATP phosphoribosyltransferase family. Long subfamily.</text>
</comment>
<accession>Q0HUP0</accession>
<protein>
    <recommendedName>
        <fullName evidence="1">ATP phosphoribosyltransferase</fullName>
        <shortName evidence="1">ATP-PRT</shortName>
        <shortName evidence="1">ATP-PRTase</shortName>
        <ecNumber evidence="1">2.4.2.17</ecNumber>
    </recommendedName>
</protein>
<feature type="chain" id="PRO_1000004505" description="ATP phosphoribosyltransferase">
    <location>
        <begin position="1"/>
        <end position="299"/>
    </location>
</feature>
<organism>
    <name type="scientific">Shewanella sp. (strain MR-7)</name>
    <dbReference type="NCBI Taxonomy" id="60481"/>
    <lineage>
        <taxon>Bacteria</taxon>
        <taxon>Pseudomonadati</taxon>
        <taxon>Pseudomonadota</taxon>
        <taxon>Gammaproteobacteria</taxon>
        <taxon>Alteromonadales</taxon>
        <taxon>Shewanellaceae</taxon>
        <taxon>Shewanella</taxon>
    </lineage>
</organism>
<keyword id="KW-0028">Amino-acid biosynthesis</keyword>
<keyword id="KW-0067">ATP-binding</keyword>
<keyword id="KW-0963">Cytoplasm</keyword>
<keyword id="KW-0328">Glycosyltransferase</keyword>
<keyword id="KW-0368">Histidine biosynthesis</keyword>
<keyword id="KW-0460">Magnesium</keyword>
<keyword id="KW-0479">Metal-binding</keyword>
<keyword id="KW-0547">Nucleotide-binding</keyword>
<keyword id="KW-0808">Transferase</keyword>
<sequence>MTESNRLRIAIQKSGRLSTDSQQLLKSCGVKFSINEQSLIAHADNMPIDLLRVRDDDIPGLVMDGVVDLGIIGENVLEEEQIERQTLNKPAEFVKLRQLDFGACRLSLAVPTEFSYADASSLEGLRIATSYPNLLRRFMQQKGISYRDCMLKGSVEVAPRAGLADGICDLVSTGATLEANGLYETEVIYRSMACVIQSTQTQTPSKQALIDRILSRVNGVIRARESKYILLHAPTETLDQIVALLPGAENPTVLPLNDDTNRVAIHAVSTEDLFWDTMEQLTALGASSILVMPIEKMMG</sequence>
<proteinExistence type="inferred from homology"/>
<name>HIS1_SHESR</name>